<accession>Q083F0</accession>
<reference key="1">
    <citation type="submission" date="2006-08" db="EMBL/GenBank/DDBJ databases">
        <title>Complete sequence of Shewanella frigidimarina NCIMB 400.</title>
        <authorList>
            <consortium name="US DOE Joint Genome Institute"/>
            <person name="Copeland A."/>
            <person name="Lucas S."/>
            <person name="Lapidus A."/>
            <person name="Barry K."/>
            <person name="Detter J.C."/>
            <person name="Glavina del Rio T."/>
            <person name="Hammon N."/>
            <person name="Israni S."/>
            <person name="Dalin E."/>
            <person name="Tice H."/>
            <person name="Pitluck S."/>
            <person name="Fredrickson J.K."/>
            <person name="Kolker E."/>
            <person name="McCuel L.A."/>
            <person name="DiChristina T."/>
            <person name="Nealson K.H."/>
            <person name="Newman D."/>
            <person name="Tiedje J.M."/>
            <person name="Zhou J."/>
            <person name="Romine M.F."/>
            <person name="Culley D.E."/>
            <person name="Serres M."/>
            <person name="Chertkov O."/>
            <person name="Brettin T."/>
            <person name="Bruce D."/>
            <person name="Han C."/>
            <person name="Tapia R."/>
            <person name="Gilna P."/>
            <person name="Schmutz J."/>
            <person name="Larimer F."/>
            <person name="Land M."/>
            <person name="Hauser L."/>
            <person name="Kyrpides N."/>
            <person name="Mikhailova N."/>
            <person name="Richardson P."/>
        </authorList>
    </citation>
    <scope>NUCLEOTIDE SEQUENCE [LARGE SCALE GENOMIC DNA]</scope>
    <source>
        <strain>NCIMB 400</strain>
    </source>
</reference>
<protein>
    <recommendedName>
        <fullName evidence="1">Succinyl-diaminopimelate desuccinylase</fullName>
        <shortName evidence="1">SDAP desuccinylase</shortName>
        <ecNumber evidence="1">3.5.1.18</ecNumber>
    </recommendedName>
    <alternativeName>
        <fullName evidence="1">N-succinyl-LL-2,6-diaminoheptanedioate amidohydrolase</fullName>
    </alternativeName>
</protein>
<gene>
    <name evidence="1" type="primary">dapE</name>
    <name type="ordered locus">Sfri_1765</name>
</gene>
<keyword id="KW-0028">Amino-acid biosynthesis</keyword>
<keyword id="KW-0170">Cobalt</keyword>
<keyword id="KW-0220">Diaminopimelate biosynthesis</keyword>
<keyword id="KW-0378">Hydrolase</keyword>
<keyword id="KW-0457">Lysine biosynthesis</keyword>
<keyword id="KW-0479">Metal-binding</keyword>
<keyword id="KW-1185">Reference proteome</keyword>
<keyword id="KW-0862">Zinc</keyword>
<evidence type="ECO:0000255" key="1">
    <source>
        <dbReference type="HAMAP-Rule" id="MF_01690"/>
    </source>
</evidence>
<dbReference type="EC" id="3.5.1.18" evidence="1"/>
<dbReference type="EMBL" id="CP000447">
    <property type="protein sequence ID" value="ABI71615.1"/>
    <property type="molecule type" value="Genomic_DNA"/>
</dbReference>
<dbReference type="SMR" id="Q083F0"/>
<dbReference type="STRING" id="318167.Sfri_1765"/>
<dbReference type="KEGG" id="sfr:Sfri_1765"/>
<dbReference type="eggNOG" id="COG0624">
    <property type="taxonomic scope" value="Bacteria"/>
</dbReference>
<dbReference type="HOGENOM" id="CLU_021802_4_0_6"/>
<dbReference type="OrthoDB" id="9809784at2"/>
<dbReference type="UniPathway" id="UPA00034">
    <property type="reaction ID" value="UER00021"/>
</dbReference>
<dbReference type="Proteomes" id="UP000000684">
    <property type="component" value="Chromosome"/>
</dbReference>
<dbReference type="GO" id="GO:0008777">
    <property type="term" value="F:acetylornithine deacetylase activity"/>
    <property type="evidence" value="ECO:0007669"/>
    <property type="project" value="TreeGrafter"/>
</dbReference>
<dbReference type="GO" id="GO:0050897">
    <property type="term" value="F:cobalt ion binding"/>
    <property type="evidence" value="ECO:0007669"/>
    <property type="project" value="UniProtKB-UniRule"/>
</dbReference>
<dbReference type="GO" id="GO:0009014">
    <property type="term" value="F:succinyl-diaminopimelate desuccinylase activity"/>
    <property type="evidence" value="ECO:0007669"/>
    <property type="project" value="UniProtKB-UniRule"/>
</dbReference>
<dbReference type="GO" id="GO:0008270">
    <property type="term" value="F:zinc ion binding"/>
    <property type="evidence" value="ECO:0007669"/>
    <property type="project" value="UniProtKB-UniRule"/>
</dbReference>
<dbReference type="GO" id="GO:0019877">
    <property type="term" value="P:diaminopimelate biosynthetic process"/>
    <property type="evidence" value="ECO:0007669"/>
    <property type="project" value="UniProtKB-UniRule"/>
</dbReference>
<dbReference type="GO" id="GO:0006526">
    <property type="term" value="P:L-arginine biosynthetic process"/>
    <property type="evidence" value="ECO:0007669"/>
    <property type="project" value="TreeGrafter"/>
</dbReference>
<dbReference type="GO" id="GO:0009089">
    <property type="term" value="P:lysine biosynthetic process via diaminopimelate"/>
    <property type="evidence" value="ECO:0007669"/>
    <property type="project" value="UniProtKB-UniRule"/>
</dbReference>
<dbReference type="CDD" id="cd03891">
    <property type="entry name" value="M20_DapE_proteobac"/>
    <property type="match status" value="1"/>
</dbReference>
<dbReference type="FunFam" id="3.30.70.360:FF:000011">
    <property type="entry name" value="Succinyl-diaminopimelate desuccinylase"/>
    <property type="match status" value="1"/>
</dbReference>
<dbReference type="FunFam" id="3.40.630.10:FF:000005">
    <property type="entry name" value="Succinyl-diaminopimelate desuccinylase"/>
    <property type="match status" value="1"/>
</dbReference>
<dbReference type="Gene3D" id="3.40.630.10">
    <property type="entry name" value="Zn peptidases"/>
    <property type="match status" value="2"/>
</dbReference>
<dbReference type="HAMAP" id="MF_01690">
    <property type="entry name" value="DapE"/>
    <property type="match status" value="1"/>
</dbReference>
<dbReference type="InterPro" id="IPR036264">
    <property type="entry name" value="Bact_exopeptidase_dim_dom"/>
</dbReference>
<dbReference type="InterPro" id="IPR005941">
    <property type="entry name" value="DapE_proteobac"/>
</dbReference>
<dbReference type="InterPro" id="IPR002933">
    <property type="entry name" value="Peptidase_M20"/>
</dbReference>
<dbReference type="InterPro" id="IPR011650">
    <property type="entry name" value="Peptidase_M20_dimer"/>
</dbReference>
<dbReference type="InterPro" id="IPR050072">
    <property type="entry name" value="Peptidase_M20A"/>
</dbReference>
<dbReference type="NCBIfam" id="TIGR01246">
    <property type="entry name" value="dapE_proteo"/>
    <property type="match status" value="1"/>
</dbReference>
<dbReference type="NCBIfam" id="NF009557">
    <property type="entry name" value="PRK13009.1"/>
    <property type="match status" value="1"/>
</dbReference>
<dbReference type="PANTHER" id="PTHR43808">
    <property type="entry name" value="ACETYLORNITHINE DEACETYLASE"/>
    <property type="match status" value="1"/>
</dbReference>
<dbReference type="PANTHER" id="PTHR43808:SF31">
    <property type="entry name" value="N-ACETYL-L-CITRULLINE DEACETYLASE"/>
    <property type="match status" value="1"/>
</dbReference>
<dbReference type="Pfam" id="PF07687">
    <property type="entry name" value="M20_dimer"/>
    <property type="match status" value="1"/>
</dbReference>
<dbReference type="Pfam" id="PF01546">
    <property type="entry name" value="Peptidase_M20"/>
    <property type="match status" value="1"/>
</dbReference>
<dbReference type="SUPFAM" id="SSF55031">
    <property type="entry name" value="Bacterial exopeptidase dimerisation domain"/>
    <property type="match status" value="1"/>
</dbReference>
<dbReference type="SUPFAM" id="SSF53187">
    <property type="entry name" value="Zn-dependent exopeptidases"/>
    <property type="match status" value="1"/>
</dbReference>
<proteinExistence type="inferred from homology"/>
<sequence length="377" mass="41108">MNNDVVELAKDLISRPSVTPLDEGCQTLMANRLAAVGFNIEPMVFEDTTNMWARRGNCDPVFCFAGHTDVVPTGDLNRWHTPPFEPTIIDNYLHGRGAADMKGSLAAMIIATERFVAKHPDHNGSIAYLITSDEEGPFINGTTRVIDTLEARNEKMTWALVGEPSSTHKLGDVVKNGRRGSLTGNLTVNGIQGHVAYPHLADNPIHKAVPALTELAQMHWDNGNEFFPPTSFQIANINGGTGASNVIPGELTVMFNFRYSTEVTAEELILRVVSILDAHGLDYDINWIFNGLPFLTGDGPLLDATREAIREVTGYETDPQTSGGTSDGRFIAPTGAQVLELGPVNATIHKVNECVNVADLEILANCYERILEKLLCK</sequence>
<feature type="chain" id="PRO_0000375731" description="Succinyl-diaminopimelate desuccinylase">
    <location>
        <begin position="1"/>
        <end position="377"/>
    </location>
</feature>
<feature type="active site" evidence="1">
    <location>
        <position position="69"/>
    </location>
</feature>
<feature type="active site" description="Proton acceptor" evidence="1">
    <location>
        <position position="134"/>
    </location>
</feature>
<feature type="binding site" evidence="1">
    <location>
        <position position="67"/>
    </location>
    <ligand>
        <name>Zn(2+)</name>
        <dbReference type="ChEBI" id="CHEBI:29105"/>
        <label>1</label>
    </ligand>
</feature>
<feature type="binding site" evidence="1">
    <location>
        <position position="100"/>
    </location>
    <ligand>
        <name>Zn(2+)</name>
        <dbReference type="ChEBI" id="CHEBI:29105"/>
        <label>1</label>
    </ligand>
</feature>
<feature type="binding site" evidence="1">
    <location>
        <position position="100"/>
    </location>
    <ligand>
        <name>Zn(2+)</name>
        <dbReference type="ChEBI" id="CHEBI:29105"/>
        <label>2</label>
    </ligand>
</feature>
<feature type="binding site" evidence="1">
    <location>
        <position position="135"/>
    </location>
    <ligand>
        <name>Zn(2+)</name>
        <dbReference type="ChEBI" id="CHEBI:29105"/>
        <label>2</label>
    </ligand>
</feature>
<feature type="binding site" evidence="1">
    <location>
        <position position="163"/>
    </location>
    <ligand>
        <name>Zn(2+)</name>
        <dbReference type="ChEBI" id="CHEBI:29105"/>
        <label>1</label>
    </ligand>
</feature>
<feature type="binding site" evidence="1">
    <location>
        <position position="349"/>
    </location>
    <ligand>
        <name>Zn(2+)</name>
        <dbReference type="ChEBI" id="CHEBI:29105"/>
        <label>2</label>
    </ligand>
</feature>
<comment type="function">
    <text evidence="1">Catalyzes the hydrolysis of N-succinyl-L,L-diaminopimelic acid (SDAP), forming succinate and LL-2,6-diaminopimelate (DAP), an intermediate involved in the bacterial biosynthesis of lysine and meso-diaminopimelic acid, an essential component of bacterial cell walls.</text>
</comment>
<comment type="catalytic activity">
    <reaction evidence="1">
        <text>N-succinyl-(2S,6S)-2,6-diaminopimelate + H2O = (2S,6S)-2,6-diaminopimelate + succinate</text>
        <dbReference type="Rhea" id="RHEA:22608"/>
        <dbReference type="ChEBI" id="CHEBI:15377"/>
        <dbReference type="ChEBI" id="CHEBI:30031"/>
        <dbReference type="ChEBI" id="CHEBI:57609"/>
        <dbReference type="ChEBI" id="CHEBI:58087"/>
        <dbReference type="EC" id="3.5.1.18"/>
    </reaction>
</comment>
<comment type="cofactor">
    <cofactor evidence="1">
        <name>Zn(2+)</name>
        <dbReference type="ChEBI" id="CHEBI:29105"/>
    </cofactor>
    <cofactor evidence="1">
        <name>Co(2+)</name>
        <dbReference type="ChEBI" id="CHEBI:48828"/>
    </cofactor>
    <text evidence="1">Binds 2 Zn(2+) or Co(2+) ions per subunit.</text>
</comment>
<comment type="pathway">
    <text evidence="1">Amino-acid biosynthesis; L-lysine biosynthesis via DAP pathway; LL-2,6-diaminopimelate from (S)-tetrahydrodipicolinate (succinylase route): step 3/3.</text>
</comment>
<comment type="subunit">
    <text evidence="1">Homodimer.</text>
</comment>
<comment type="similarity">
    <text evidence="1">Belongs to the peptidase M20A family. DapE subfamily.</text>
</comment>
<organism>
    <name type="scientific">Shewanella frigidimarina (strain NCIMB 400)</name>
    <dbReference type="NCBI Taxonomy" id="318167"/>
    <lineage>
        <taxon>Bacteria</taxon>
        <taxon>Pseudomonadati</taxon>
        <taxon>Pseudomonadota</taxon>
        <taxon>Gammaproteobacteria</taxon>
        <taxon>Alteromonadales</taxon>
        <taxon>Shewanellaceae</taxon>
        <taxon>Shewanella</taxon>
    </lineage>
</organism>
<name>DAPE_SHEFN</name>